<keyword id="KW-0472">Membrane</keyword>
<keyword id="KW-0520">NAD</keyword>
<keyword id="KW-0521">NADP</keyword>
<keyword id="KW-0618">Plastoquinone</keyword>
<keyword id="KW-0874">Quinone</keyword>
<keyword id="KW-1185">Reference proteome</keyword>
<keyword id="KW-0793">Thylakoid</keyword>
<keyword id="KW-1278">Translocase</keyword>
<keyword id="KW-0813">Transport</keyword>
<proteinExistence type="inferred from homology"/>
<organism>
    <name type="scientific">Gloeothece citriformis (strain PCC 7424)</name>
    <name type="common">Cyanothece sp. (strain PCC 7424)</name>
    <dbReference type="NCBI Taxonomy" id="65393"/>
    <lineage>
        <taxon>Bacteria</taxon>
        <taxon>Bacillati</taxon>
        <taxon>Cyanobacteriota</taxon>
        <taxon>Cyanophyceae</taxon>
        <taxon>Oscillatoriophycideae</taxon>
        <taxon>Chroococcales</taxon>
        <taxon>Aphanothecaceae</taxon>
        <taxon>Gloeothece</taxon>
        <taxon>Gloeothece citriformis</taxon>
    </lineage>
</organism>
<reference key="1">
    <citation type="journal article" date="2011" name="MBio">
        <title>Novel metabolic attributes of the genus Cyanothece, comprising a group of unicellular nitrogen-fixing Cyanobacteria.</title>
        <authorList>
            <person name="Bandyopadhyay A."/>
            <person name="Elvitigala T."/>
            <person name="Welsh E."/>
            <person name="Stockel J."/>
            <person name="Liberton M."/>
            <person name="Min H."/>
            <person name="Sherman L.A."/>
            <person name="Pakrasi H.B."/>
        </authorList>
    </citation>
    <scope>NUCLEOTIDE SEQUENCE [LARGE SCALE GENOMIC DNA]</scope>
    <source>
        <strain>PCC 7424</strain>
    </source>
</reference>
<evidence type="ECO:0000255" key="1">
    <source>
        <dbReference type="HAMAP-Rule" id="MF_01352"/>
    </source>
</evidence>
<feature type="chain" id="PRO_1000143672" description="NAD(P)H-quinone oxidoreductase subunit M">
    <location>
        <begin position="1"/>
        <end position="119"/>
    </location>
</feature>
<gene>
    <name evidence="1" type="primary">ndhM</name>
    <name type="ordered locus">PCC7424_3477</name>
</gene>
<comment type="function">
    <text evidence="1">NDH-1 shuttles electrons from an unknown electron donor, via FMN and iron-sulfur (Fe-S) centers, to quinones in the respiratory and/or the photosynthetic chain. The immediate electron acceptor for the enzyme in this species is believed to be plastoquinone. Couples the redox reaction to proton translocation, and thus conserves the redox energy in a proton gradient. Cyanobacterial NDH-1 also plays a role in inorganic carbon-concentration.</text>
</comment>
<comment type="catalytic activity">
    <reaction evidence="1">
        <text>a plastoquinone + NADH + (n+1) H(+)(in) = a plastoquinol + NAD(+) + n H(+)(out)</text>
        <dbReference type="Rhea" id="RHEA:42608"/>
        <dbReference type="Rhea" id="RHEA-COMP:9561"/>
        <dbReference type="Rhea" id="RHEA-COMP:9562"/>
        <dbReference type="ChEBI" id="CHEBI:15378"/>
        <dbReference type="ChEBI" id="CHEBI:17757"/>
        <dbReference type="ChEBI" id="CHEBI:57540"/>
        <dbReference type="ChEBI" id="CHEBI:57945"/>
        <dbReference type="ChEBI" id="CHEBI:62192"/>
    </reaction>
</comment>
<comment type="catalytic activity">
    <reaction evidence="1">
        <text>a plastoquinone + NADPH + (n+1) H(+)(in) = a plastoquinol + NADP(+) + n H(+)(out)</text>
        <dbReference type="Rhea" id="RHEA:42612"/>
        <dbReference type="Rhea" id="RHEA-COMP:9561"/>
        <dbReference type="Rhea" id="RHEA-COMP:9562"/>
        <dbReference type="ChEBI" id="CHEBI:15378"/>
        <dbReference type="ChEBI" id="CHEBI:17757"/>
        <dbReference type="ChEBI" id="CHEBI:57783"/>
        <dbReference type="ChEBI" id="CHEBI:58349"/>
        <dbReference type="ChEBI" id="CHEBI:62192"/>
    </reaction>
</comment>
<comment type="subunit">
    <text evidence="1">NDH-1 can be composed of about 15 different subunits; different subcomplexes with different compositions have been identified which probably have different functions.</text>
</comment>
<comment type="subcellular location">
    <subcellularLocation>
        <location evidence="1">Cellular thylakoid membrane</location>
        <topology evidence="1">Peripheral membrane protein</topology>
        <orientation evidence="1">Cytoplasmic side</orientation>
    </subcellularLocation>
</comment>
<comment type="similarity">
    <text evidence="1">Belongs to the complex I NdhM subunit family.</text>
</comment>
<protein>
    <recommendedName>
        <fullName evidence="1">NAD(P)H-quinone oxidoreductase subunit M</fullName>
        <ecNumber evidence="1">7.1.1.-</ecNumber>
    </recommendedName>
    <alternativeName>
        <fullName evidence="1">NAD(P)H dehydrogenase I subunit M</fullName>
        <shortName evidence="1">NDH-1 subunit M</shortName>
        <shortName evidence="1">NDH-M</shortName>
    </alternativeName>
</protein>
<dbReference type="EC" id="7.1.1.-" evidence="1"/>
<dbReference type="EMBL" id="CP001291">
    <property type="protein sequence ID" value="ACK71870.1"/>
    <property type="molecule type" value="Genomic_DNA"/>
</dbReference>
<dbReference type="RefSeq" id="WP_015955465.1">
    <property type="nucleotide sequence ID" value="NC_011729.1"/>
</dbReference>
<dbReference type="SMR" id="B7KFF4"/>
<dbReference type="STRING" id="65393.PCC7424_3477"/>
<dbReference type="KEGG" id="cyc:PCC7424_3477"/>
<dbReference type="eggNOG" id="ENOG5031AQM">
    <property type="taxonomic scope" value="Bacteria"/>
</dbReference>
<dbReference type="HOGENOM" id="CLU_137431_0_0_3"/>
<dbReference type="OrthoDB" id="461686at2"/>
<dbReference type="Proteomes" id="UP000002384">
    <property type="component" value="Chromosome"/>
</dbReference>
<dbReference type="GO" id="GO:0031676">
    <property type="term" value="C:plasma membrane-derived thylakoid membrane"/>
    <property type="evidence" value="ECO:0007669"/>
    <property type="project" value="UniProtKB-SubCell"/>
</dbReference>
<dbReference type="GO" id="GO:0016655">
    <property type="term" value="F:oxidoreductase activity, acting on NAD(P)H, quinone or similar compound as acceptor"/>
    <property type="evidence" value="ECO:0007669"/>
    <property type="project" value="UniProtKB-UniRule"/>
</dbReference>
<dbReference type="GO" id="GO:0048038">
    <property type="term" value="F:quinone binding"/>
    <property type="evidence" value="ECO:0007669"/>
    <property type="project" value="UniProtKB-KW"/>
</dbReference>
<dbReference type="HAMAP" id="MF_01352">
    <property type="entry name" value="NDH1_NDH1M"/>
    <property type="match status" value="1"/>
</dbReference>
<dbReference type="InterPro" id="IPR018922">
    <property type="entry name" value="NdhM"/>
</dbReference>
<dbReference type="PANTHER" id="PTHR36900">
    <property type="entry name" value="NAD(P)H-QUINONE OXIDOREDUCTASE SUBUNIT M, CHLOROPLASTIC"/>
    <property type="match status" value="1"/>
</dbReference>
<dbReference type="PANTHER" id="PTHR36900:SF1">
    <property type="entry name" value="NAD(P)H-QUINONE OXIDOREDUCTASE SUBUNIT M, CHLOROPLASTIC"/>
    <property type="match status" value="1"/>
</dbReference>
<dbReference type="Pfam" id="PF10664">
    <property type="entry name" value="NdhM"/>
    <property type="match status" value="1"/>
</dbReference>
<sequence>MLLKSTTRHIRIYTAEIQNNELVESDNVLTLDVDPDNEFLWDEDSLQKVYRKFDDLVESYSGEDLTEYNLRRIGSDLELFIRSLLQQGEISYNLDSRVLNYSMGLPRVESPETEGKYRL</sequence>
<name>NDHM_GLOC7</name>
<accession>B7KFF4</accession>